<dbReference type="EMBL" id="CP000095">
    <property type="protein sequence ID" value="AAZ58750.1"/>
    <property type="molecule type" value="Genomic_DNA"/>
</dbReference>
<dbReference type="RefSeq" id="WP_011295604.1">
    <property type="nucleotide sequence ID" value="NC_007335.2"/>
</dbReference>
<dbReference type="SMR" id="Q46IC8"/>
<dbReference type="STRING" id="59920.PMN2A_1260"/>
<dbReference type="KEGG" id="pmn:PMN2A_1260"/>
<dbReference type="HOGENOM" id="CLU_123265_0_1_3"/>
<dbReference type="OrthoDB" id="9808966at2"/>
<dbReference type="PhylomeDB" id="Q46IC8"/>
<dbReference type="Proteomes" id="UP000002535">
    <property type="component" value="Chromosome"/>
</dbReference>
<dbReference type="GO" id="GO:1990904">
    <property type="term" value="C:ribonucleoprotein complex"/>
    <property type="evidence" value="ECO:0007669"/>
    <property type="project" value="UniProtKB-KW"/>
</dbReference>
<dbReference type="GO" id="GO:0005840">
    <property type="term" value="C:ribosome"/>
    <property type="evidence" value="ECO:0007669"/>
    <property type="project" value="UniProtKB-KW"/>
</dbReference>
<dbReference type="GO" id="GO:0019843">
    <property type="term" value="F:rRNA binding"/>
    <property type="evidence" value="ECO:0007669"/>
    <property type="project" value="UniProtKB-UniRule"/>
</dbReference>
<dbReference type="GO" id="GO:0003735">
    <property type="term" value="F:structural constituent of ribosome"/>
    <property type="evidence" value="ECO:0007669"/>
    <property type="project" value="InterPro"/>
</dbReference>
<dbReference type="GO" id="GO:0000027">
    <property type="term" value="P:ribosomal large subunit assembly"/>
    <property type="evidence" value="ECO:0007669"/>
    <property type="project" value="UniProtKB-UniRule"/>
</dbReference>
<dbReference type="GO" id="GO:0006412">
    <property type="term" value="P:translation"/>
    <property type="evidence" value="ECO:0007669"/>
    <property type="project" value="InterPro"/>
</dbReference>
<dbReference type="CDD" id="cd07026">
    <property type="entry name" value="Ribosomal_L20"/>
    <property type="match status" value="1"/>
</dbReference>
<dbReference type="FunFam" id="1.10.1900.20:FF:000001">
    <property type="entry name" value="50S ribosomal protein L20"/>
    <property type="match status" value="1"/>
</dbReference>
<dbReference type="Gene3D" id="6.10.160.10">
    <property type="match status" value="1"/>
</dbReference>
<dbReference type="Gene3D" id="1.10.1900.20">
    <property type="entry name" value="Ribosomal protein L20"/>
    <property type="match status" value="1"/>
</dbReference>
<dbReference type="HAMAP" id="MF_00382">
    <property type="entry name" value="Ribosomal_bL20"/>
    <property type="match status" value="1"/>
</dbReference>
<dbReference type="InterPro" id="IPR005813">
    <property type="entry name" value="Ribosomal_bL20"/>
</dbReference>
<dbReference type="InterPro" id="IPR049946">
    <property type="entry name" value="RIBOSOMAL_L20_CS"/>
</dbReference>
<dbReference type="InterPro" id="IPR035566">
    <property type="entry name" value="Ribosomal_protein_bL20_C"/>
</dbReference>
<dbReference type="NCBIfam" id="TIGR01032">
    <property type="entry name" value="rplT_bact"/>
    <property type="match status" value="1"/>
</dbReference>
<dbReference type="PANTHER" id="PTHR10986">
    <property type="entry name" value="39S RIBOSOMAL PROTEIN L20"/>
    <property type="match status" value="1"/>
</dbReference>
<dbReference type="Pfam" id="PF00453">
    <property type="entry name" value="Ribosomal_L20"/>
    <property type="match status" value="1"/>
</dbReference>
<dbReference type="PRINTS" id="PR00062">
    <property type="entry name" value="RIBOSOMALL20"/>
</dbReference>
<dbReference type="SUPFAM" id="SSF74731">
    <property type="entry name" value="Ribosomal protein L20"/>
    <property type="match status" value="1"/>
</dbReference>
<dbReference type="PROSITE" id="PS00937">
    <property type="entry name" value="RIBOSOMAL_L20"/>
    <property type="match status" value="1"/>
</dbReference>
<keyword id="KW-1185">Reference proteome</keyword>
<keyword id="KW-0687">Ribonucleoprotein</keyword>
<keyword id="KW-0689">Ribosomal protein</keyword>
<keyword id="KW-0694">RNA-binding</keyword>
<keyword id="KW-0699">rRNA-binding</keyword>
<organism>
    <name type="scientific">Prochlorococcus marinus (strain NATL2A)</name>
    <dbReference type="NCBI Taxonomy" id="59920"/>
    <lineage>
        <taxon>Bacteria</taxon>
        <taxon>Bacillati</taxon>
        <taxon>Cyanobacteriota</taxon>
        <taxon>Cyanophyceae</taxon>
        <taxon>Synechococcales</taxon>
        <taxon>Prochlorococcaceae</taxon>
        <taxon>Prochlorococcus</taxon>
    </lineage>
</organism>
<reference key="1">
    <citation type="journal article" date="2007" name="PLoS Genet.">
        <title>Patterns and implications of gene gain and loss in the evolution of Prochlorococcus.</title>
        <authorList>
            <person name="Kettler G.C."/>
            <person name="Martiny A.C."/>
            <person name="Huang K."/>
            <person name="Zucker J."/>
            <person name="Coleman M.L."/>
            <person name="Rodrigue S."/>
            <person name="Chen F."/>
            <person name="Lapidus A."/>
            <person name="Ferriera S."/>
            <person name="Johnson J."/>
            <person name="Steglich C."/>
            <person name="Church G.M."/>
            <person name="Richardson P."/>
            <person name="Chisholm S.W."/>
        </authorList>
    </citation>
    <scope>NUCLEOTIDE SEQUENCE [LARGE SCALE GENOMIC DNA]</scope>
    <source>
        <strain>NATL2A</strain>
    </source>
</reference>
<evidence type="ECO:0000255" key="1">
    <source>
        <dbReference type="HAMAP-Rule" id="MF_00382"/>
    </source>
</evidence>
<evidence type="ECO:0000305" key="2"/>
<proteinExistence type="inferred from homology"/>
<name>RL20_PROMT</name>
<protein>
    <recommendedName>
        <fullName evidence="1">Large ribosomal subunit protein bL20</fullName>
    </recommendedName>
    <alternativeName>
        <fullName evidence="2">50S ribosomal protein L20</fullName>
    </alternativeName>
</protein>
<feature type="chain" id="PRO_0000243713" description="Large ribosomal subunit protein bL20">
    <location>
        <begin position="1"/>
        <end position="115"/>
    </location>
</feature>
<accession>Q46IC8</accession>
<comment type="function">
    <text evidence="1">Binds directly to 23S ribosomal RNA and is necessary for the in vitro assembly process of the 50S ribosomal subunit. It is not involved in the protein synthesizing functions of that subunit.</text>
</comment>
<comment type="similarity">
    <text evidence="1">Belongs to the bacterial ribosomal protein bL20 family.</text>
</comment>
<sequence>MARVKRGNVARKRRNKILRLARGFRGGNGTLFRTANQRVMKALCNAYRDRRRRKRDFRRLWIARINAAARLNGLSYSKFMGGLKKADIRINRKMLAQLAVIDPKTFTNVAVNSKS</sequence>
<gene>
    <name evidence="1" type="primary">rplT</name>
    <name evidence="1" type="synonym">rpl20</name>
    <name type="ordered locus">PMN2A_1260</name>
</gene>